<gene>
    <name evidence="1" type="primary">psbE</name>
</gene>
<protein>
    <recommendedName>
        <fullName evidence="1">Cytochrome b559 subunit alpha</fullName>
    </recommendedName>
    <alternativeName>
        <fullName evidence="1">PSII reaction center subunit V</fullName>
    </alternativeName>
</protein>
<dbReference type="EMBL" id="DQ347958">
    <property type="protein sequence ID" value="ABC56230.1"/>
    <property type="molecule type" value="Genomic_DNA"/>
</dbReference>
<dbReference type="RefSeq" id="YP_538865.1">
    <property type="nucleotide sequence ID" value="NC_007943.1"/>
</dbReference>
<dbReference type="SMR" id="Q2MIH0"/>
<dbReference type="GeneID" id="3989441"/>
<dbReference type="GO" id="GO:0009535">
    <property type="term" value="C:chloroplast thylakoid membrane"/>
    <property type="evidence" value="ECO:0007669"/>
    <property type="project" value="UniProtKB-SubCell"/>
</dbReference>
<dbReference type="GO" id="GO:0009539">
    <property type="term" value="C:photosystem II reaction center"/>
    <property type="evidence" value="ECO:0007669"/>
    <property type="project" value="InterPro"/>
</dbReference>
<dbReference type="GO" id="GO:0009055">
    <property type="term" value="F:electron transfer activity"/>
    <property type="evidence" value="ECO:0007669"/>
    <property type="project" value="UniProtKB-UniRule"/>
</dbReference>
<dbReference type="GO" id="GO:0020037">
    <property type="term" value="F:heme binding"/>
    <property type="evidence" value="ECO:0007669"/>
    <property type="project" value="InterPro"/>
</dbReference>
<dbReference type="GO" id="GO:0005506">
    <property type="term" value="F:iron ion binding"/>
    <property type="evidence" value="ECO:0007669"/>
    <property type="project" value="UniProtKB-UniRule"/>
</dbReference>
<dbReference type="GO" id="GO:0009767">
    <property type="term" value="P:photosynthetic electron transport chain"/>
    <property type="evidence" value="ECO:0007669"/>
    <property type="project" value="InterPro"/>
</dbReference>
<dbReference type="Gene3D" id="1.20.5.860">
    <property type="entry name" value="Photosystem II cytochrome b559, alpha subunit"/>
    <property type="match status" value="1"/>
</dbReference>
<dbReference type="HAMAP" id="MF_00642">
    <property type="entry name" value="PSII_PsbE"/>
    <property type="match status" value="1"/>
</dbReference>
<dbReference type="InterPro" id="IPR006217">
    <property type="entry name" value="PSII_cyt_b559_asu"/>
</dbReference>
<dbReference type="InterPro" id="IPR037025">
    <property type="entry name" value="PSII_cyt_b559_asu_sf"/>
</dbReference>
<dbReference type="InterPro" id="IPR006216">
    <property type="entry name" value="PSII_cyt_b559_CS"/>
</dbReference>
<dbReference type="InterPro" id="IPR013081">
    <property type="entry name" value="PSII_cyt_b559_N"/>
</dbReference>
<dbReference type="InterPro" id="IPR013082">
    <property type="entry name" value="PSII_cytb559_asu_lum"/>
</dbReference>
<dbReference type="NCBIfam" id="TIGR01332">
    <property type="entry name" value="cyt_b559_alpha"/>
    <property type="match status" value="1"/>
</dbReference>
<dbReference type="PANTHER" id="PTHR33391">
    <property type="entry name" value="CYTOCHROME B559 SUBUNIT BETA-RELATED"/>
    <property type="match status" value="1"/>
</dbReference>
<dbReference type="PANTHER" id="PTHR33391:SF9">
    <property type="entry name" value="CYTOCHROME B559 SUBUNIT BETA-RELATED"/>
    <property type="match status" value="1"/>
</dbReference>
<dbReference type="Pfam" id="PF00283">
    <property type="entry name" value="Cytochrom_B559"/>
    <property type="match status" value="1"/>
</dbReference>
<dbReference type="Pfam" id="PF00284">
    <property type="entry name" value="Cytochrom_B559a"/>
    <property type="match status" value="1"/>
</dbReference>
<dbReference type="PIRSF" id="PIRSF000036">
    <property type="entry name" value="PsbE"/>
    <property type="match status" value="1"/>
</dbReference>
<dbReference type="SUPFAM" id="SSF161045">
    <property type="entry name" value="Cytochrome b559 subunits"/>
    <property type="match status" value="1"/>
</dbReference>
<dbReference type="PROSITE" id="PS00537">
    <property type="entry name" value="CYTOCHROME_B559"/>
    <property type="match status" value="1"/>
</dbReference>
<sequence length="83" mass="9397">MSGSTGERSFADIITSIRYWVIHSITIPSLFIAGWLFVSTGLAYDVFGSPRPNEYFTESRQGIPLITGRFDPLEQLDEFSRSF</sequence>
<feature type="chain" id="PRO_0000233209" description="Cytochrome b559 subunit alpha">
    <location>
        <begin position="1"/>
        <end position="83"/>
    </location>
</feature>
<feature type="transmembrane region" description="Helical" evidence="1">
    <location>
        <begin position="21"/>
        <end position="35"/>
    </location>
</feature>
<feature type="binding site" description="axial binding residue" evidence="1">
    <location>
        <position position="23"/>
    </location>
    <ligand>
        <name>heme</name>
        <dbReference type="ChEBI" id="CHEBI:30413"/>
        <note>ligand shared with beta subunit</note>
    </ligand>
    <ligandPart>
        <name>Fe</name>
        <dbReference type="ChEBI" id="CHEBI:18248"/>
    </ligandPart>
</feature>
<name>PSBE_SOLBU</name>
<evidence type="ECO:0000255" key="1">
    <source>
        <dbReference type="HAMAP-Rule" id="MF_00642"/>
    </source>
</evidence>
<comment type="function">
    <text evidence="1">This b-type cytochrome is tightly associated with the reaction center of photosystem II (PSII). PSII is a light-driven water:plastoquinone oxidoreductase that uses light energy to abstract electrons from H(2)O, generating O(2) and a proton gradient subsequently used for ATP formation. It consists of a core antenna complex that captures photons, and an electron transfer chain that converts photonic excitation into a charge separation.</text>
</comment>
<comment type="cofactor">
    <cofactor evidence="1">
        <name>heme b</name>
        <dbReference type="ChEBI" id="CHEBI:60344"/>
    </cofactor>
    <text evidence="1">With its partner (PsbF) binds heme. PSII binds additional chlorophylls, carotenoids and specific lipids.</text>
</comment>
<comment type="subunit">
    <text evidence="1">Heterodimer of an alpha subunit and a beta subunit. PSII is composed of 1 copy each of membrane proteins PsbA, PsbB, PsbC, PsbD, PsbE, PsbF, PsbH, PsbI, PsbJ, PsbK, PsbL, PsbM, PsbT, PsbX, PsbY, PsbZ, Psb30/Ycf12, at least 3 peripheral proteins of the oxygen-evolving complex and a large number of cofactors. It forms dimeric complexes.</text>
</comment>
<comment type="subcellular location">
    <subcellularLocation>
        <location evidence="1">Plastid</location>
        <location evidence="1">Chloroplast thylakoid membrane</location>
        <topology evidence="1">Single-pass membrane protein</topology>
    </subcellularLocation>
</comment>
<comment type="similarity">
    <text evidence="1">Belongs to the PsbE/PsbF family.</text>
</comment>
<keyword id="KW-0150">Chloroplast</keyword>
<keyword id="KW-0249">Electron transport</keyword>
<keyword id="KW-0349">Heme</keyword>
<keyword id="KW-0408">Iron</keyword>
<keyword id="KW-0472">Membrane</keyword>
<keyword id="KW-0479">Metal-binding</keyword>
<keyword id="KW-0602">Photosynthesis</keyword>
<keyword id="KW-0604">Photosystem II</keyword>
<keyword id="KW-0934">Plastid</keyword>
<keyword id="KW-0793">Thylakoid</keyword>
<keyword id="KW-0812">Transmembrane</keyword>
<keyword id="KW-1133">Transmembrane helix</keyword>
<keyword id="KW-0813">Transport</keyword>
<geneLocation type="chloroplast"/>
<reference key="1">
    <citation type="journal article" date="2006" name="Theor. Appl. Genet.">
        <title>Complete chloroplast genome sequences of Solanum bulbocastanum, Solanum lycopersicum and comparative analyses with other Solanaceae genomes.</title>
        <authorList>
            <person name="Daniell H."/>
            <person name="Lee S.-B."/>
            <person name="Grevich J."/>
            <person name="Saski C."/>
            <person name="Quesada-Vargas T."/>
            <person name="Guda C."/>
            <person name="Tomkins J."/>
            <person name="Jansen R.K."/>
        </authorList>
    </citation>
    <scope>NUCLEOTIDE SEQUENCE [LARGE SCALE GENOMIC DNA]</scope>
    <source>
        <strain>cv. PT29</strain>
    </source>
</reference>
<accession>Q2MIH0</accession>
<organism>
    <name type="scientific">Solanum bulbocastanum</name>
    <name type="common">Wild potato</name>
    <dbReference type="NCBI Taxonomy" id="147425"/>
    <lineage>
        <taxon>Eukaryota</taxon>
        <taxon>Viridiplantae</taxon>
        <taxon>Streptophyta</taxon>
        <taxon>Embryophyta</taxon>
        <taxon>Tracheophyta</taxon>
        <taxon>Spermatophyta</taxon>
        <taxon>Magnoliopsida</taxon>
        <taxon>eudicotyledons</taxon>
        <taxon>Gunneridae</taxon>
        <taxon>Pentapetalae</taxon>
        <taxon>asterids</taxon>
        <taxon>lamiids</taxon>
        <taxon>Solanales</taxon>
        <taxon>Solanaceae</taxon>
        <taxon>Solanoideae</taxon>
        <taxon>Solaneae</taxon>
        <taxon>Solanum</taxon>
    </lineage>
</organism>
<proteinExistence type="inferred from homology"/>